<sequence>MRKKTSSNKKNTAKKNNNISLHRKLGLIYKKTILILKIVLIIFICLFAFTKYFASLKSYLKTNIYQTTTELGFKLENVIIEGQQNVDEPTILKVLNAKKGSSIFALNLDEIRNNLKNNRWIKEVYVSRRLPSTIYIKLFEREPIAIWQINNQLFLIDEEGYEISKNIEPFPHLLHVVGEGANIYASKLVNELQKYPALINKTSSAIRCGDRRWDLNLKGGINIKLPAKNFEEALKYIDALNKANKLFNQNYKQLDLRDKNKYYIEKY</sequence>
<keyword id="KW-0131">Cell cycle</keyword>
<keyword id="KW-0132">Cell division</keyword>
<keyword id="KW-0997">Cell inner membrane</keyword>
<keyword id="KW-1003">Cell membrane</keyword>
<keyword id="KW-0472">Membrane</keyword>
<keyword id="KW-0812">Transmembrane</keyword>
<keyword id="KW-1133">Transmembrane helix</keyword>
<accession>Q1RHX3</accession>
<proteinExistence type="inferred from homology"/>
<feature type="chain" id="PRO_0000280969" description="Cell division protein FtsQ">
    <location>
        <begin position="1"/>
        <end position="267"/>
    </location>
</feature>
<feature type="topological domain" description="Cytoplasmic" evidence="1">
    <location>
        <begin position="1"/>
        <end position="32"/>
    </location>
</feature>
<feature type="transmembrane region" description="Helical" evidence="1">
    <location>
        <begin position="33"/>
        <end position="53"/>
    </location>
</feature>
<feature type="topological domain" description="Periplasmic" evidence="1">
    <location>
        <begin position="54"/>
        <end position="267"/>
    </location>
</feature>
<feature type="domain" description="POTRA" evidence="2">
    <location>
        <begin position="73"/>
        <end position="141"/>
    </location>
</feature>
<gene>
    <name evidence="1" type="primary">ftsQ</name>
    <name type="ordered locus">RBE_0960</name>
</gene>
<evidence type="ECO:0000255" key="1">
    <source>
        <dbReference type="HAMAP-Rule" id="MF_00911"/>
    </source>
</evidence>
<evidence type="ECO:0000255" key="2">
    <source>
        <dbReference type="PROSITE-ProRule" id="PRU01115"/>
    </source>
</evidence>
<name>FTSQ_RICBR</name>
<dbReference type="EMBL" id="CP000087">
    <property type="protein sequence ID" value="ABE05041.1"/>
    <property type="molecule type" value="Genomic_DNA"/>
</dbReference>
<dbReference type="RefSeq" id="WP_011477621.1">
    <property type="nucleotide sequence ID" value="NC_007940.1"/>
</dbReference>
<dbReference type="SMR" id="Q1RHX3"/>
<dbReference type="KEGG" id="rbe:RBE_0960"/>
<dbReference type="eggNOG" id="COG1589">
    <property type="taxonomic scope" value="Bacteria"/>
</dbReference>
<dbReference type="HOGENOM" id="CLU_061141_2_1_5"/>
<dbReference type="OrthoDB" id="9783091at2"/>
<dbReference type="Proteomes" id="UP000001951">
    <property type="component" value="Chromosome"/>
</dbReference>
<dbReference type="GO" id="GO:0032153">
    <property type="term" value="C:cell division site"/>
    <property type="evidence" value="ECO:0007669"/>
    <property type="project" value="UniProtKB-UniRule"/>
</dbReference>
<dbReference type="GO" id="GO:0005886">
    <property type="term" value="C:plasma membrane"/>
    <property type="evidence" value="ECO:0007669"/>
    <property type="project" value="UniProtKB-SubCell"/>
</dbReference>
<dbReference type="GO" id="GO:0090529">
    <property type="term" value="P:cell septum assembly"/>
    <property type="evidence" value="ECO:0007669"/>
    <property type="project" value="InterPro"/>
</dbReference>
<dbReference type="GO" id="GO:0043093">
    <property type="term" value="P:FtsZ-dependent cytokinesis"/>
    <property type="evidence" value="ECO:0007669"/>
    <property type="project" value="UniProtKB-UniRule"/>
</dbReference>
<dbReference type="Gene3D" id="3.10.20.310">
    <property type="entry name" value="membrane protein fhac"/>
    <property type="match status" value="1"/>
</dbReference>
<dbReference type="HAMAP" id="MF_00911">
    <property type="entry name" value="FtsQ_subfam"/>
    <property type="match status" value="1"/>
</dbReference>
<dbReference type="InterPro" id="IPR005548">
    <property type="entry name" value="Cell_div_FtsQ/DivIB_C"/>
</dbReference>
<dbReference type="InterPro" id="IPR026579">
    <property type="entry name" value="FtsQ"/>
</dbReference>
<dbReference type="InterPro" id="IPR034746">
    <property type="entry name" value="POTRA"/>
</dbReference>
<dbReference type="InterPro" id="IPR013685">
    <property type="entry name" value="POTRA_FtsQ_type"/>
</dbReference>
<dbReference type="PANTHER" id="PTHR35851">
    <property type="entry name" value="CELL DIVISION PROTEIN FTSQ"/>
    <property type="match status" value="1"/>
</dbReference>
<dbReference type="PANTHER" id="PTHR35851:SF1">
    <property type="entry name" value="CELL DIVISION PROTEIN FTSQ"/>
    <property type="match status" value="1"/>
</dbReference>
<dbReference type="Pfam" id="PF03799">
    <property type="entry name" value="FtsQ_DivIB_C"/>
    <property type="match status" value="1"/>
</dbReference>
<dbReference type="Pfam" id="PF08478">
    <property type="entry name" value="POTRA_1"/>
    <property type="match status" value="1"/>
</dbReference>
<dbReference type="PROSITE" id="PS51779">
    <property type="entry name" value="POTRA"/>
    <property type="match status" value="1"/>
</dbReference>
<organism>
    <name type="scientific">Rickettsia bellii (strain RML369-C)</name>
    <dbReference type="NCBI Taxonomy" id="336407"/>
    <lineage>
        <taxon>Bacteria</taxon>
        <taxon>Pseudomonadati</taxon>
        <taxon>Pseudomonadota</taxon>
        <taxon>Alphaproteobacteria</taxon>
        <taxon>Rickettsiales</taxon>
        <taxon>Rickettsiaceae</taxon>
        <taxon>Rickettsieae</taxon>
        <taxon>Rickettsia</taxon>
        <taxon>belli group</taxon>
    </lineage>
</organism>
<protein>
    <recommendedName>
        <fullName evidence="1">Cell division protein FtsQ</fullName>
    </recommendedName>
</protein>
<comment type="function">
    <text evidence="1">Essential cell division protein.</text>
</comment>
<comment type="subcellular location">
    <subcellularLocation>
        <location evidence="1">Cell inner membrane</location>
        <topology evidence="1">Single-pass type II membrane protein</topology>
    </subcellularLocation>
    <text evidence="1">Localizes to the division septum.</text>
</comment>
<comment type="similarity">
    <text evidence="1">Belongs to the FtsQ/DivIB family. FtsQ subfamily.</text>
</comment>
<reference key="1">
    <citation type="journal article" date="2006" name="PLoS Genet.">
        <title>Genome sequence of Rickettsia bellii illuminates the role of amoebae in gene exchanges between intracellular pathogens.</title>
        <authorList>
            <person name="Ogata H."/>
            <person name="La Scola B."/>
            <person name="Audic S."/>
            <person name="Renesto P."/>
            <person name="Blanc G."/>
            <person name="Robert C."/>
            <person name="Fournier P.-E."/>
            <person name="Claverie J.-M."/>
            <person name="Raoult D."/>
        </authorList>
    </citation>
    <scope>NUCLEOTIDE SEQUENCE [LARGE SCALE GENOMIC DNA]</scope>
    <source>
        <strain>RML369-C</strain>
    </source>
</reference>